<name>ARGB_BORPE</name>
<protein>
    <recommendedName>
        <fullName evidence="1">Acetylglutamate kinase</fullName>
        <ecNumber evidence="1">2.7.2.8</ecNumber>
    </recommendedName>
    <alternativeName>
        <fullName evidence="1">N-acetyl-L-glutamate 5-phosphotransferase</fullName>
    </alternativeName>
    <alternativeName>
        <fullName evidence="1">NAG kinase</fullName>
        <shortName evidence="1">NAGK</shortName>
    </alternativeName>
</protein>
<gene>
    <name evidence="1" type="primary">argB</name>
    <name type="ordered locus">BP0383</name>
</gene>
<evidence type="ECO:0000255" key="1">
    <source>
        <dbReference type="HAMAP-Rule" id="MF_00082"/>
    </source>
</evidence>
<comment type="function">
    <text evidence="1">Catalyzes the ATP-dependent phosphorylation of N-acetyl-L-glutamate.</text>
</comment>
<comment type="catalytic activity">
    <reaction evidence="1">
        <text>N-acetyl-L-glutamate + ATP = N-acetyl-L-glutamyl 5-phosphate + ADP</text>
        <dbReference type="Rhea" id="RHEA:14629"/>
        <dbReference type="ChEBI" id="CHEBI:30616"/>
        <dbReference type="ChEBI" id="CHEBI:44337"/>
        <dbReference type="ChEBI" id="CHEBI:57936"/>
        <dbReference type="ChEBI" id="CHEBI:456216"/>
        <dbReference type="EC" id="2.7.2.8"/>
    </reaction>
</comment>
<comment type="pathway">
    <text evidence="1">Amino-acid biosynthesis; L-arginine biosynthesis; N(2)-acetyl-L-ornithine from L-glutamate: step 2/4.</text>
</comment>
<comment type="subcellular location">
    <subcellularLocation>
        <location evidence="1">Cytoplasm</location>
    </subcellularLocation>
</comment>
<comment type="similarity">
    <text evidence="1">Belongs to the acetylglutamate kinase family. ArgB subfamily.</text>
</comment>
<keyword id="KW-0028">Amino-acid biosynthesis</keyword>
<keyword id="KW-0055">Arginine biosynthesis</keyword>
<keyword id="KW-0067">ATP-binding</keyword>
<keyword id="KW-0963">Cytoplasm</keyword>
<keyword id="KW-0418">Kinase</keyword>
<keyword id="KW-0547">Nucleotide-binding</keyword>
<keyword id="KW-1185">Reference proteome</keyword>
<keyword id="KW-0808">Transferase</keyword>
<dbReference type="EC" id="2.7.2.8" evidence="1"/>
<dbReference type="EMBL" id="BX640412">
    <property type="protein sequence ID" value="CAE44715.1"/>
    <property type="molecule type" value="Genomic_DNA"/>
</dbReference>
<dbReference type="RefSeq" id="NP_879255.1">
    <property type="nucleotide sequence ID" value="NC_002929.2"/>
</dbReference>
<dbReference type="RefSeq" id="WP_010929778.1">
    <property type="nucleotide sequence ID" value="NZ_CP039022.1"/>
</dbReference>
<dbReference type="SMR" id="Q7VSM2"/>
<dbReference type="STRING" id="257313.BP0383"/>
<dbReference type="PaxDb" id="257313-BP0383"/>
<dbReference type="GeneID" id="69603364"/>
<dbReference type="KEGG" id="bpe:BP0383"/>
<dbReference type="PATRIC" id="fig|257313.5.peg.413"/>
<dbReference type="eggNOG" id="COG0548">
    <property type="taxonomic scope" value="Bacteria"/>
</dbReference>
<dbReference type="HOGENOM" id="CLU_053680_0_0_4"/>
<dbReference type="UniPathway" id="UPA00068">
    <property type="reaction ID" value="UER00107"/>
</dbReference>
<dbReference type="Proteomes" id="UP000002676">
    <property type="component" value="Chromosome"/>
</dbReference>
<dbReference type="GO" id="GO:0005737">
    <property type="term" value="C:cytoplasm"/>
    <property type="evidence" value="ECO:0007669"/>
    <property type="project" value="UniProtKB-SubCell"/>
</dbReference>
<dbReference type="GO" id="GO:0003991">
    <property type="term" value="F:acetylglutamate kinase activity"/>
    <property type="evidence" value="ECO:0007669"/>
    <property type="project" value="UniProtKB-UniRule"/>
</dbReference>
<dbReference type="GO" id="GO:0005524">
    <property type="term" value="F:ATP binding"/>
    <property type="evidence" value="ECO:0007669"/>
    <property type="project" value="UniProtKB-UniRule"/>
</dbReference>
<dbReference type="GO" id="GO:0042450">
    <property type="term" value="P:arginine biosynthetic process via ornithine"/>
    <property type="evidence" value="ECO:0007669"/>
    <property type="project" value="UniProtKB-UniRule"/>
</dbReference>
<dbReference type="GO" id="GO:0006526">
    <property type="term" value="P:L-arginine biosynthetic process"/>
    <property type="evidence" value="ECO:0007669"/>
    <property type="project" value="UniProtKB-UniPathway"/>
</dbReference>
<dbReference type="CDD" id="cd04250">
    <property type="entry name" value="AAK_NAGK-C"/>
    <property type="match status" value="1"/>
</dbReference>
<dbReference type="FunFam" id="3.40.1160.10:FF:000004">
    <property type="entry name" value="Acetylglutamate kinase"/>
    <property type="match status" value="1"/>
</dbReference>
<dbReference type="Gene3D" id="3.40.1160.10">
    <property type="entry name" value="Acetylglutamate kinase-like"/>
    <property type="match status" value="1"/>
</dbReference>
<dbReference type="HAMAP" id="MF_00082">
    <property type="entry name" value="ArgB"/>
    <property type="match status" value="1"/>
</dbReference>
<dbReference type="InterPro" id="IPR036393">
    <property type="entry name" value="AceGlu_kinase-like_sf"/>
</dbReference>
<dbReference type="InterPro" id="IPR004662">
    <property type="entry name" value="AcgluKinase_fam"/>
</dbReference>
<dbReference type="InterPro" id="IPR037528">
    <property type="entry name" value="ArgB"/>
</dbReference>
<dbReference type="InterPro" id="IPR001048">
    <property type="entry name" value="Asp/Glu/Uridylate_kinase"/>
</dbReference>
<dbReference type="InterPro" id="IPR001057">
    <property type="entry name" value="Glu/AcGlu_kinase"/>
</dbReference>
<dbReference type="InterPro" id="IPR041727">
    <property type="entry name" value="NAGK-C"/>
</dbReference>
<dbReference type="NCBIfam" id="TIGR00761">
    <property type="entry name" value="argB"/>
    <property type="match status" value="1"/>
</dbReference>
<dbReference type="PANTHER" id="PTHR23342">
    <property type="entry name" value="N-ACETYLGLUTAMATE SYNTHASE"/>
    <property type="match status" value="1"/>
</dbReference>
<dbReference type="PANTHER" id="PTHR23342:SF0">
    <property type="entry name" value="N-ACETYLGLUTAMATE SYNTHASE, MITOCHONDRIAL"/>
    <property type="match status" value="1"/>
</dbReference>
<dbReference type="Pfam" id="PF00696">
    <property type="entry name" value="AA_kinase"/>
    <property type="match status" value="1"/>
</dbReference>
<dbReference type="PIRSF" id="PIRSF000728">
    <property type="entry name" value="NAGK"/>
    <property type="match status" value="1"/>
</dbReference>
<dbReference type="PRINTS" id="PR00474">
    <property type="entry name" value="GLU5KINASE"/>
</dbReference>
<dbReference type="SUPFAM" id="SSF53633">
    <property type="entry name" value="Carbamate kinase-like"/>
    <property type="match status" value="1"/>
</dbReference>
<accession>Q7VSM2</accession>
<sequence length="300" mass="31755">MTDTPDPAAVLSPAVKAAVLSEALPYIRRFHGKTIVVKYGGNAMTEERLQRSFAHDVVLLKLVGLNPVVVHGGGPQIDDALRRIGKQGTFVQGMRVTDAETMEVVEWVLGGQVQQDIVMMINEVGGKAVGLTGKDGMLIQATKKLMVNKDDPSQPLDIGLVGDITRVEPAVVKALQDDQFIPVISPIGYGEDGTAYNINADVVAGKMAEVLGAEKLLMMTNTPGVLDKGGKLLRSLSAQTIDELFADGTISGGMLPKISSSLDAAKNGVNSVHIVDGRVPHCLLLEILTDQGVGTMISSH</sequence>
<organism>
    <name type="scientific">Bordetella pertussis (strain Tohama I / ATCC BAA-589 / NCTC 13251)</name>
    <dbReference type="NCBI Taxonomy" id="257313"/>
    <lineage>
        <taxon>Bacteria</taxon>
        <taxon>Pseudomonadati</taxon>
        <taxon>Pseudomonadota</taxon>
        <taxon>Betaproteobacteria</taxon>
        <taxon>Burkholderiales</taxon>
        <taxon>Alcaligenaceae</taxon>
        <taxon>Bordetella</taxon>
    </lineage>
</organism>
<proteinExistence type="inferred from homology"/>
<reference key="1">
    <citation type="journal article" date="2003" name="Nat. Genet.">
        <title>Comparative analysis of the genome sequences of Bordetella pertussis, Bordetella parapertussis and Bordetella bronchiseptica.</title>
        <authorList>
            <person name="Parkhill J."/>
            <person name="Sebaihia M."/>
            <person name="Preston A."/>
            <person name="Murphy L.D."/>
            <person name="Thomson N.R."/>
            <person name="Harris D.E."/>
            <person name="Holden M.T.G."/>
            <person name="Churcher C.M."/>
            <person name="Bentley S.D."/>
            <person name="Mungall K.L."/>
            <person name="Cerdeno-Tarraga A.-M."/>
            <person name="Temple L."/>
            <person name="James K.D."/>
            <person name="Harris B."/>
            <person name="Quail M.A."/>
            <person name="Achtman M."/>
            <person name="Atkin R."/>
            <person name="Baker S."/>
            <person name="Basham D."/>
            <person name="Bason N."/>
            <person name="Cherevach I."/>
            <person name="Chillingworth T."/>
            <person name="Collins M."/>
            <person name="Cronin A."/>
            <person name="Davis P."/>
            <person name="Doggett J."/>
            <person name="Feltwell T."/>
            <person name="Goble A."/>
            <person name="Hamlin N."/>
            <person name="Hauser H."/>
            <person name="Holroyd S."/>
            <person name="Jagels K."/>
            <person name="Leather S."/>
            <person name="Moule S."/>
            <person name="Norberczak H."/>
            <person name="O'Neil S."/>
            <person name="Ormond D."/>
            <person name="Price C."/>
            <person name="Rabbinowitsch E."/>
            <person name="Rutter S."/>
            <person name="Sanders M."/>
            <person name="Saunders D."/>
            <person name="Seeger K."/>
            <person name="Sharp S."/>
            <person name="Simmonds M."/>
            <person name="Skelton J."/>
            <person name="Squares R."/>
            <person name="Squares S."/>
            <person name="Stevens K."/>
            <person name="Unwin L."/>
            <person name="Whitehead S."/>
            <person name="Barrell B.G."/>
            <person name="Maskell D.J."/>
        </authorList>
    </citation>
    <scope>NUCLEOTIDE SEQUENCE [LARGE SCALE GENOMIC DNA]</scope>
    <source>
        <strain>Tohama I / ATCC BAA-589 / NCTC 13251</strain>
    </source>
</reference>
<feature type="chain" id="PRO_0000112594" description="Acetylglutamate kinase">
    <location>
        <begin position="1"/>
        <end position="300"/>
    </location>
</feature>
<feature type="binding site" evidence="1">
    <location>
        <begin position="73"/>
        <end position="74"/>
    </location>
    <ligand>
        <name>substrate</name>
    </ligand>
</feature>
<feature type="binding site" evidence="1">
    <location>
        <position position="95"/>
    </location>
    <ligand>
        <name>substrate</name>
    </ligand>
</feature>
<feature type="binding site" evidence="1">
    <location>
        <position position="197"/>
    </location>
    <ligand>
        <name>substrate</name>
    </ligand>
</feature>
<feature type="site" description="Transition state stabilizer" evidence="1">
    <location>
        <position position="38"/>
    </location>
</feature>
<feature type="site" description="Transition state stabilizer" evidence="1">
    <location>
        <position position="257"/>
    </location>
</feature>